<comment type="function">
    <text evidence="2 9">Transcriptional regulator involved in developmental processes. Functions in association with APBB1, SET and HDAC factors as a transcriptional repressor, that inhibits the expression of CASP4. TSHZ3-mediated transcription repression involves the recruitment of histone deacetylases HDAC1 and HDAC2. Associates with chromatin in a region surrounding the CASP4 transcriptional start site(s) (PubMed:19343227). Regulates the development of neurons involved in both respiratory rhythm and airflow control. Promotes maintenance of nucleus ambiguus (nA) motoneurons, which govern upper airway function, and establishes a respiratory rhythm generator (RRG) activity compatible with survival at birth. Involved in the differentiation of the proximal uretic smooth muscle cells during developmental processes. Involved in the up-regulation of myocardin, that directs the expression of smooth muscle cells in the proximal ureter (By similarity). Involved in the modulation of glutamatergic synaptic transmission and long-term synaptic potentiation (By similarity).</text>
</comment>
<comment type="subunit">
    <text evidence="9">Interacts (via homeobox domain) with APBB1 (via PID domain 1). Interacts (via N-terminus) with HDAC1 and HDAC2; the interaction is direct. Found in a trimeric complex with APBB1 and HDAC1; the interaction between HDAC1 and APBB1 is mediated by TSHZ3.</text>
</comment>
<comment type="interaction">
    <interactant intactId="EBI-9053916">
        <id>Q63HK5</id>
    </interactant>
    <interactant intactId="EBI-10215533">
        <id>Q9H9E1</id>
        <label>ANKRA2</label>
    </interactant>
    <organismsDiffer>false</organismsDiffer>
    <experiments>3</experiments>
</comment>
<comment type="interaction">
    <interactant intactId="EBI-9053916">
        <id>Q63HK5</id>
    </interactant>
    <interactant intactId="EBI-742588">
        <id>Q9UBZ4</id>
        <label>APEX2</label>
    </interactant>
    <organismsDiffer>false</organismsDiffer>
    <experiments>3</experiments>
</comment>
<comment type="interaction">
    <interactant intactId="EBI-9053916">
        <id>Q63HK5</id>
    </interactant>
    <interactant intactId="EBI-10175300">
        <id>Q8TD31-3</id>
        <label>CCHCR1</label>
    </interactant>
    <organismsDiffer>false</organismsDiffer>
    <experiments>3</experiments>
</comment>
<comment type="interaction">
    <interactant intactId="EBI-9053916">
        <id>Q63HK5</id>
    </interactant>
    <interactant intactId="EBI-741977">
        <id>Q96MT8</id>
        <label>CEP63</label>
    </interactant>
    <organismsDiffer>false</organismsDiffer>
    <experiments>3</experiments>
</comment>
<comment type="interaction">
    <interactant intactId="EBI-9053916">
        <id>Q63HK5</id>
    </interactant>
    <interactant intactId="EBI-739624">
        <id>Q8NHQ1</id>
        <label>CEP70</label>
    </interactant>
    <organismsDiffer>false</organismsDiffer>
    <experiments>3</experiments>
</comment>
<comment type="interaction">
    <interactant intactId="EBI-9053916">
        <id>Q63HK5</id>
    </interactant>
    <interactant intactId="EBI-3866319">
        <id>Q9Y2V7</id>
        <label>COG6</label>
    </interactant>
    <organismsDiffer>false</organismsDiffer>
    <experiments>3</experiments>
</comment>
<comment type="interaction">
    <interactant intactId="EBI-9053916">
        <id>Q63HK5</id>
    </interactant>
    <interactant intactId="EBI-10171858">
        <id>Q13363-2</id>
        <label>CTBP1</label>
    </interactant>
    <organismsDiffer>false</organismsDiffer>
    <experiments>3</experiments>
</comment>
<comment type="interaction">
    <interactant intactId="EBI-9053916">
        <id>Q63HK5</id>
    </interactant>
    <interactant intactId="EBI-10171902">
        <id>P56545-3</id>
        <label>CTBP2</label>
    </interactant>
    <organismsDiffer>false</organismsDiffer>
    <experiments>6</experiments>
</comment>
<comment type="interaction">
    <interactant intactId="EBI-9053916">
        <id>Q63HK5</id>
    </interactant>
    <interactant intactId="EBI-618309">
        <id>Q08379</id>
        <label>GOLGA2</label>
    </interactant>
    <organismsDiffer>false</organismsDiffer>
    <experiments>3</experiments>
</comment>
<comment type="interaction">
    <interactant intactId="EBI-9053916">
        <id>Q63HK5</id>
    </interactant>
    <interactant intactId="EBI-7116203">
        <id>O75031</id>
        <label>HSF2BP</label>
    </interactant>
    <organismsDiffer>false</organismsDiffer>
    <experiments>3</experiments>
</comment>
<comment type="interaction">
    <interactant intactId="EBI-9053916">
        <id>Q63HK5</id>
    </interactant>
    <interactant intactId="EBI-749265">
        <id>Q8N6L0</id>
        <label>KASH5</label>
    </interactant>
    <organismsDiffer>false</organismsDiffer>
    <experiments>3</experiments>
</comment>
<comment type="interaction">
    <interactant intactId="EBI-9053916">
        <id>Q63HK5</id>
    </interactant>
    <interactant intactId="EBI-948001">
        <id>Q15323</id>
        <label>KRT31</label>
    </interactant>
    <organismsDiffer>false</organismsDiffer>
    <experiments>3</experiments>
</comment>
<comment type="interaction">
    <interactant intactId="EBI-9053916">
        <id>Q63HK5</id>
    </interactant>
    <interactant intactId="EBI-10171697">
        <id>Q6A162</id>
        <label>KRT40</label>
    </interactant>
    <organismsDiffer>false</organismsDiffer>
    <experiments>3</experiments>
</comment>
<comment type="interaction">
    <interactant intactId="EBI-9053916">
        <id>Q63HK5</id>
    </interactant>
    <interactant intactId="EBI-12003882">
        <id>Q5JTD7</id>
        <label>LRRC73</label>
    </interactant>
    <organismsDiffer>false</organismsDiffer>
    <experiments>3</experiments>
</comment>
<comment type="interaction">
    <interactant intactId="EBI-9053916">
        <id>Q63HK5</id>
    </interactant>
    <interactant intactId="EBI-742610">
        <id>Q9Y6D9</id>
        <label>MAD1L1</label>
    </interactant>
    <organismsDiffer>false</organismsDiffer>
    <experiments>3</experiments>
</comment>
<comment type="interaction">
    <interactant intactId="EBI-9053916">
        <id>Q63HK5</id>
    </interactant>
    <interactant intactId="EBI-723426">
        <id>Q13084</id>
        <label>MRPL28</label>
    </interactant>
    <organismsDiffer>false</organismsDiffer>
    <experiments>3</experiments>
</comment>
<comment type="interaction">
    <interactant intactId="EBI-9053916">
        <id>Q63HK5</id>
    </interactant>
    <interactant intactId="EBI-742948">
        <id>Q5JR59</id>
        <label>MTUS2</label>
    </interactant>
    <organismsDiffer>false</organismsDiffer>
    <experiments>3</experiments>
</comment>
<comment type="interaction">
    <interactant intactId="EBI-9053916">
        <id>Q63HK5</id>
    </interactant>
    <interactant intactId="EBI-11522433">
        <id>Q5JR59-3</id>
        <label>MTUS2</label>
    </interactant>
    <organismsDiffer>false</organismsDiffer>
    <experiments>3</experiments>
</comment>
<comment type="interaction">
    <interactant intactId="EBI-9053916">
        <id>Q63HK5</id>
    </interactant>
    <interactant intactId="EBI-14066006">
        <id>Q4G0R1</id>
        <label>PIBF1</label>
    </interactant>
    <organismsDiffer>false</organismsDiffer>
    <experiments>3</experiments>
</comment>
<comment type="interaction">
    <interactant intactId="EBI-9053916">
        <id>Q63HK5</id>
    </interactant>
    <interactant intactId="EBI-726876">
        <id>Q6NUQ1</id>
        <label>RINT1</label>
    </interactant>
    <organismsDiffer>false</organismsDiffer>
    <experiments>5</experiments>
</comment>
<comment type="interaction">
    <interactant intactId="EBI-9053916">
        <id>Q63HK5</id>
    </interactant>
    <interactant intactId="EBI-1378139">
        <id>Q9HAT0</id>
        <label>ROPN1</label>
    </interactant>
    <organismsDiffer>false</organismsDiffer>
    <experiments>3</experiments>
</comment>
<comment type="interaction">
    <interactant intactId="EBI-9053916">
        <id>Q63HK5</id>
    </interactant>
    <interactant intactId="EBI-413317">
        <id>Q96R06</id>
        <label>SPAG5</label>
    </interactant>
    <organismsDiffer>false</organismsDiffer>
    <experiments>3</experiments>
</comment>
<comment type="interaction">
    <interactant intactId="EBI-9053916">
        <id>Q63HK5</id>
    </interactant>
    <interactant intactId="EBI-529518">
        <id>Q86VP1</id>
        <label>TAX1BP1</label>
    </interactant>
    <organismsDiffer>false</organismsDiffer>
    <experiments>3</experiments>
</comment>
<comment type="interaction">
    <interactant intactId="EBI-9053916">
        <id>Q63HK5</id>
    </interactant>
    <interactant intactId="EBI-11139477">
        <id>Q96N21</id>
        <label>TEPSIN</label>
    </interactant>
    <organismsDiffer>false</organismsDiffer>
    <experiments>3</experiments>
</comment>
<comment type="interaction">
    <interactant intactId="EBI-9053916">
        <id>Q63HK5</id>
    </interactant>
    <interactant intactId="EBI-1105213">
        <id>Q9UBB9</id>
        <label>TFIP11</label>
    </interactant>
    <organismsDiffer>false</organismsDiffer>
    <experiments>7</experiments>
</comment>
<comment type="interaction">
    <interactant intactId="EBI-9053916">
        <id>Q63HK5</id>
    </interactant>
    <interactant intactId="EBI-355744">
        <id>Q12933</id>
        <label>TRAF2</label>
    </interactant>
    <organismsDiffer>false</organismsDiffer>
    <experiments>3</experiments>
</comment>
<comment type="interaction">
    <interactant intactId="EBI-9053916">
        <id>Q63HK5</id>
    </interactant>
    <interactant intactId="EBI-740098">
        <id>P36406</id>
        <label>TRIM23</label>
    </interactant>
    <organismsDiffer>false</organismsDiffer>
    <experiments>3</experiments>
</comment>
<comment type="interaction">
    <interactant intactId="EBI-9053916">
        <id>Q63HK5</id>
    </interactant>
    <interactant intactId="EBI-719493">
        <id>P14373</id>
        <label>TRIM27</label>
    </interactant>
    <organismsDiffer>false</organismsDiffer>
    <experiments>3</experiments>
</comment>
<comment type="interaction">
    <interactant intactId="EBI-9053916">
        <id>Q63HK5</id>
    </interactant>
    <interactant intactId="EBI-2130429">
        <id>Q9BYV2</id>
        <label>TRIM54</label>
    </interactant>
    <organismsDiffer>false</organismsDiffer>
    <experiments>6</experiments>
</comment>
<comment type="interaction">
    <interactant intactId="EBI-9053916">
        <id>Q63HK5</id>
    </interactant>
    <interactant intactId="EBI-12806590">
        <id>Q86WV8</id>
        <label>TSC1</label>
    </interactant>
    <organismsDiffer>false</organismsDiffer>
    <experiments>3</experiments>
</comment>
<comment type="subcellular location">
    <subcellularLocation>
        <location evidence="5 9">Nucleus</location>
    </subcellularLocation>
    <subcellularLocation>
        <location evidence="1">Cell projection</location>
        <location evidence="1">Growth cone</location>
    </subcellularLocation>
    <text evidence="1">Colocalizes with APBB1 in axonal growth cone (By similarity). Colocalizes with APBB1 in the nucleus.</text>
</comment>
<comment type="tissue specificity">
    <text evidence="8 9 11">Expressed in brain; strongly reduced in post-mortem elderly subjects with Alzheimer disease (PubMed:18776146, PubMed:19343227). Expressed in the fetal neocortex (PubMed:27668656).</text>
</comment>
<comment type="developmental stage">
    <text evidence="10">Expressed in peri-urothelial cells of the proximal ureter and renal pelvis at 9 weeks of gestation.</text>
</comment>
<comment type="disease">
    <text evidence="11">TSHZ3 haploinsufficiency due to proximal chromosome 19q13.11 deletions causes a neurodevelopmental disorder characterized by developmental delay, absent or delayed speech, intellectual disability, and autistic features. Some patients may have reanal tract abnormalities.</text>
</comment>
<comment type="similarity">
    <text evidence="12">Belongs to the teashirt C2H2-type zinc-finger protein family.</text>
</comment>
<comment type="sequence caution" evidence="12">
    <conflict type="erroneous initiation">
        <sequence resource="EMBL-CDS" id="AAI27096"/>
    </conflict>
    <text>Truncated N-terminus.</text>
</comment>
<comment type="sequence caution" evidence="12">
    <conflict type="erroneous initiation">
        <sequence resource="EMBL-CDS" id="AAI27097"/>
    </conflict>
    <text>Truncated N-terminus.</text>
</comment>
<comment type="sequence caution" evidence="12">
    <conflict type="erroneous initiation">
        <sequence resource="EMBL-CDS" id="CAB66739"/>
    </conflict>
    <text>Truncated N-terminus.</text>
</comment>
<comment type="online information" name="Protein Spotlight">
    <link uri="https://www.proteinspotlight.org/back_issues/122"/>
    <text>Life's first breath - Issue 122 of October 2010</text>
</comment>
<keyword id="KW-0002">3D-structure</keyword>
<keyword id="KW-0966">Cell projection</keyword>
<keyword id="KW-0175">Coiled coil</keyword>
<keyword id="KW-0217">Developmental protein</keyword>
<keyword id="KW-0238">DNA-binding</keyword>
<keyword id="KW-0371">Homeobox</keyword>
<keyword id="KW-0479">Metal-binding</keyword>
<keyword id="KW-0539">Nucleus</keyword>
<keyword id="KW-0597">Phosphoprotein</keyword>
<keyword id="KW-1267">Proteomics identification</keyword>
<keyword id="KW-1185">Reference proteome</keyword>
<keyword id="KW-0677">Repeat</keyword>
<keyword id="KW-0678">Repressor</keyword>
<keyword id="KW-0804">Transcription</keyword>
<keyword id="KW-0805">Transcription regulation</keyword>
<keyword id="KW-0862">Zinc</keyword>
<keyword id="KW-0863">Zinc-finger</keyword>
<reference key="1">
    <citation type="journal article" date="2007" name="BMC Genomics">
        <title>The full-ORF clone resource of the German cDNA consortium.</title>
        <authorList>
            <person name="Bechtel S."/>
            <person name="Rosenfelder H."/>
            <person name="Duda A."/>
            <person name="Schmidt C.P."/>
            <person name="Ernst U."/>
            <person name="Wellenreuther R."/>
            <person name="Mehrle A."/>
            <person name="Schuster C."/>
            <person name="Bahr A."/>
            <person name="Bloecker H."/>
            <person name="Heubner D."/>
            <person name="Hoerlein A."/>
            <person name="Michel G."/>
            <person name="Wedler H."/>
            <person name="Koehrer K."/>
            <person name="Ottenwaelder B."/>
            <person name="Poustka A."/>
            <person name="Wiemann S."/>
            <person name="Schupp I."/>
        </authorList>
    </citation>
    <scope>NUCLEOTIDE SEQUENCE [LARGE SCALE MRNA]</scope>
    <scope>VARIANT GLY-469</scope>
    <source>
        <tissue>Endometrial tumor</tissue>
    </source>
</reference>
<reference key="2">
    <citation type="journal article" date="2000" name="DNA Res.">
        <title>Prediction of the coding sequences of unidentified human genes. XVII. The complete sequences of 100 new cDNA clones from brain which code for large proteins in vitro.</title>
        <authorList>
            <person name="Nagase T."/>
            <person name="Kikuno R."/>
            <person name="Ishikawa K."/>
            <person name="Hirosawa M."/>
            <person name="Ohara O."/>
        </authorList>
    </citation>
    <scope>NUCLEOTIDE SEQUENCE [LARGE SCALE MRNA] OF 3-1081</scope>
    <source>
        <tissue>Brain</tissue>
    </source>
</reference>
<reference key="3">
    <citation type="journal article" date="2001" name="Genome Res.">
        <title>Towards a catalog of human genes and proteins: sequencing and analysis of 500 novel complete protein coding human cDNAs.</title>
        <authorList>
            <person name="Wiemann S."/>
            <person name="Weil B."/>
            <person name="Wellenreuther R."/>
            <person name="Gassenhuber J."/>
            <person name="Glassl S."/>
            <person name="Ansorge W."/>
            <person name="Boecher M."/>
            <person name="Bloecker H."/>
            <person name="Bauersachs S."/>
            <person name="Blum H."/>
            <person name="Lauber J."/>
            <person name="Duesterhoeft A."/>
            <person name="Beyer A."/>
            <person name="Koehrer K."/>
            <person name="Strack N."/>
            <person name="Mewes H.-W."/>
            <person name="Ottenwaelder B."/>
            <person name="Obermaier B."/>
            <person name="Tampe J."/>
            <person name="Heubner D."/>
            <person name="Wambutt R."/>
            <person name="Korn B."/>
            <person name="Klein M."/>
            <person name="Poustka A."/>
        </authorList>
    </citation>
    <scope>NUCLEOTIDE SEQUENCE [LARGE SCALE MRNA] OF 176-1081</scope>
    <source>
        <tissue>Testis</tissue>
    </source>
</reference>
<reference key="4">
    <citation type="journal article" date="2004" name="Genome Res.">
        <title>The status, quality, and expansion of the NIH full-length cDNA project: the Mammalian Gene Collection (MGC).</title>
        <authorList>
            <consortium name="The MGC Project Team"/>
        </authorList>
    </citation>
    <scope>NUCLEOTIDE SEQUENCE [LARGE SCALE MRNA] OF 176-1081</scope>
</reference>
<reference key="5">
    <citation type="journal article" date="2008" name="Development">
        <title>Teashirt 3 is necessary for ureteral smooth muscle differentiation downstream of SHH and BMP4.</title>
        <authorList>
            <person name="Caubit X."/>
            <person name="Lye C.M."/>
            <person name="Martin E."/>
            <person name="Core N."/>
            <person name="Long D.A."/>
            <person name="Vola C."/>
            <person name="Jenkins D."/>
            <person name="Garratt A.N."/>
            <person name="Skaer H."/>
            <person name="Woolf A.S."/>
            <person name="Fasano L."/>
        </authorList>
    </citation>
    <scope>TISSUE SPECIFICITY</scope>
</reference>
<reference key="6">
    <citation type="journal article" date="2009" name="Anal. Chem.">
        <title>Lys-N and trypsin cover complementary parts of the phosphoproteome in a refined SCX-based approach.</title>
        <authorList>
            <person name="Gauci S."/>
            <person name="Helbig A.O."/>
            <person name="Slijper M."/>
            <person name="Krijgsveld J."/>
            <person name="Heck A.J."/>
            <person name="Mohammed S."/>
        </authorList>
    </citation>
    <scope>IDENTIFICATION BY MASS SPECTROMETRY [LARGE SCALE ANALYSIS]</scope>
</reference>
<reference key="7">
    <citation type="journal article" date="2009" name="PLoS ONE">
        <title>FE65 binds Teashirt, inhibiting expression of the primate-specific caspase-4.</title>
        <authorList>
            <person name="Kajiwara Y."/>
            <person name="Akram A."/>
            <person name="Katsel P."/>
            <person name="Haroutunian V."/>
            <person name="Schmeidler J."/>
            <person name="Beecham G."/>
            <person name="Haines J.L."/>
            <person name="Pericak-Vance M.A."/>
            <person name="Buxbaum J.D."/>
        </authorList>
    </citation>
    <scope>FUNCTION</scope>
    <scope>INTERACTION WITH APBB1; HDAC1 AND HDAC2</scope>
    <scope>IDENTIFICATION IN A TRIMERIC COMPLEX WITH APBB1 AND HDAC1</scope>
    <scope>CHROMATIN-BINDING</scope>
    <scope>MUTAGENESIS OF 953-VAL--TYR-955</scope>
    <scope>SUBCELLULAR LOCATION</scope>
    <scope>TISSUE SPECIFICITY</scope>
</reference>
<reference key="8">
    <citation type="journal article" date="2009" name="Sci. Signal.">
        <title>Quantitative phosphoproteomic analysis of T cell receptor signaling reveals system-wide modulation of protein-protein interactions.</title>
        <authorList>
            <person name="Mayya V."/>
            <person name="Lundgren D.H."/>
            <person name="Hwang S.-I."/>
            <person name="Rezaul K."/>
            <person name="Wu L."/>
            <person name="Eng J.K."/>
            <person name="Rodionov V."/>
            <person name="Han D.K."/>
        </authorList>
    </citation>
    <scope>IDENTIFICATION BY MASS SPECTROMETRY [LARGE SCALE ANALYSIS]</scope>
    <source>
        <tissue>Leukemic T-cell</tissue>
    </source>
</reference>
<reference key="9">
    <citation type="journal article" date="2011" name="Sci. Signal.">
        <title>System-wide temporal characterization of the proteome and phosphoproteome of human embryonic stem cell differentiation.</title>
        <authorList>
            <person name="Rigbolt K.T."/>
            <person name="Prokhorova T.A."/>
            <person name="Akimov V."/>
            <person name="Henningsen J."/>
            <person name="Johansen P.T."/>
            <person name="Kratchmarova I."/>
            <person name="Kassem M."/>
            <person name="Mann M."/>
            <person name="Olsen J.V."/>
            <person name="Blagoev B."/>
        </authorList>
    </citation>
    <scope>PHOSPHORYLATION [LARGE SCALE ANALYSIS] AT SER-682</scope>
    <scope>IDENTIFICATION BY MASS SPECTROMETRY [LARGE SCALE ANALYSIS]</scope>
</reference>
<reference key="10">
    <citation type="journal article" date="2016" name="Nat. Genet.">
        <title>TSHZ3 deletion causes an autism syndrome and defects in cortical projection neurons.</title>
        <authorList>
            <person name="Caubit X."/>
            <person name="Gubellini P."/>
            <person name="Andrieux J."/>
            <person name="Roubertoux P.L."/>
            <person name="Metwaly M."/>
            <person name="Jacq B."/>
            <person name="Fatmi A."/>
            <person name="Had-Aissouni L."/>
            <person name="Kwan K.Y."/>
            <person name="Salin P."/>
            <person name="Carlier M."/>
            <person name="Lieden A."/>
            <person name="Rudd E."/>
            <person name="Shinawi M."/>
            <person name="Vincent-Delorme C."/>
            <person name="Cuisset J.M."/>
            <person name="Lemaitre M.P."/>
            <person name="Abderrehamane F."/>
            <person name="Duban B."/>
            <person name="Lemaitre J.F."/>
            <person name="Woolf A.S."/>
            <person name="Bockenhauer D."/>
            <person name="Severac D."/>
            <person name="Dubois E."/>
            <person name="Zhu Y."/>
            <person name="Sestan N."/>
            <person name="Garratt A.N."/>
            <person name="Kerkerian-Le Goff L."/>
            <person name="Fasano L."/>
        </authorList>
    </citation>
    <scope>TISSUE SPECIFICITY</scope>
    <scope>INVOLVEMENT IN NEURODEVELOPMENTAL DISORDER</scope>
</reference>
<reference key="11">
    <citation type="journal article" date="2010" name="Nephrol. Dial. Transplant.">
        <title>Analysis of TSHZ2 and TSHZ3 genes in congenital pelvi-ureteric junction obstruction.</title>
        <authorList>
            <person name="Jenkins D."/>
            <person name="Caubit X."/>
            <person name="Dimovski A."/>
            <person name="Matevska N."/>
            <person name="Lye C.M."/>
            <person name="Cabuk F."/>
            <person name="Gucev Z."/>
            <person name="Tasic V."/>
            <person name="Fasano L."/>
            <person name="Woolf A.S."/>
        </authorList>
    </citation>
    <scope>VARIANT GLY-469</scope>
    <scope>DEVELOPMENTAL STAGE</scope>
</reference>
<reference key="12">
    <citation type="submission" date="2006-10" db="PDB data bank">
        <title>Solution structure of the first and the second ZF-C2H2-like domains of human teashirt homolog 3.</title>
        <authorList>
            <consortium name="RIKEN structural genomics initiative (RSGI)"/>
        </authorList>
    </citation>
    <scope>STRUCTURE BY NMR OF 200-303</scope>
</reference>
<feature type="chain" id="PRO_0000047066" description="Teashirt homolog 3">
    <location>
        <begin position="1"/>
        <end position="1081"/>
    </location>
</feature>
<feature type="zinc finger region" description="C2H2-type 1" evidence="4">
    <location>
        <begin position="214"/>
        <end position="238"/>
    </location>
</feature>
<feature type="zinc finger region" description="C2H2-type 2" evidence="4">
    <location>
        <begin position="275"/>
        <end position="299"/>
    </location>
</feature>
<feature type="zinc finger region" description="C2H2-type 3; atypical" evidence="4">
    <location>
        <begin position="386"/>
        <end position="404"/>
    </location>
</feature>
<feature type="DNA-binding region" description="Homeobox; atypical" evidence="5">
    <location>
        <begin position="891"/>
        <end position="961"/>
    </location>
</feature>
<feature type="zinc finger region" description="C2H2-type 4" evidence="4">
    <location>
        <begin position="976"/>
        <end position="998"/>
    </location>
</feature>
<feature type="zinc finger region" description="C2H2-type 5" evidence="4">
    <location>
        <begin position="1041"/>
        <end position="1064"/>
    </location>
</feature>
<feature type="region of interest" description="Disordered" evidence="6">
    <location>
        <begin position="141"/>
        <end position="161"/>
    </location>
</feature>
<feature type="region of interest" description="Disordered" evidence="6">
    <location>
        <begin position="238"/>
        <end position="257"/>
    </location>
</feature>
<feature type="region of interest" description="Disordered" evidence="6">
    <location>
        <begin position="325"/>
        <end position="364"/>
    </location>
</feature>
<feature type="region of interest" description="Disordered" evidence="6">
    <location>
        <begin position="473"/>
        <end position="502"/>
    </location>
</feature>
<feature type="region of interest" description="Disordered" evidence="6">
    <location>
        <begin position="579"/>
        <end position="604"/>
    </location>
</feature>
<feature type="region of interest" description="Disordered" evidence="6">
    <location>
        <begin position="626"/>
        <end position="687"/>
    </location>
</feature>
<feature type="region of interest" description="Disordered" evidence="6">
    <location>
        <begin position="855"/>
        <end position="897"/>
    </location>
</feature>
<feature type="coiled-coil region" evidence="3">
    <location>
        <begin position="606"/>
        <end position="630"/>
    </location>
</feature>
<feature type="compositionally biased region" description="Low complexity" evidence="6">
    <location>
        <begin position="148"/>
        <end position="161"/>
    </location>
</feature>
<feature type="compositionally biased region" description="Basic and acidic residues" evidence="6">
    <location>
        <begin position="238"/>
        <end position="247"/>
    </location>
</feature>
<feature type="compositionally biased region" description="Polar residues" evidence="6">
    <location>
        <begin position="335"/>
        <end position="364"/>
    </location>
</feature>
<feature type="compositionally biased region" description="Basic and acidic residues" evidence="6">
    <location>
        <begin position="473"/>
        <end position="491"/>
    </location>
</feature>
<feature type="compositionally biased region" description="Polar residues" evidence="6">
    <location>
        <begin position="581"/>
        <end position="603"/>
    </location>
</feature>
<feature type="compositionally biased region" description="Low complexity" evidence="6">
    <location>
        <begin position="856"/>
        <end position="869"/>
    </location>
</feature>
<feature type="modified residue" description="Phosphoserine" evidence="13">
    <location>
        <position position="682"/>
    </location>
</feature>
<feature type="sequence variant" id="VAR_063635" description="In dbSNP:rs143453460." evidence="7 10">
    <original>E</original>
    <variation>G</variation>
    <location>
        <position position="469"/>
    </location>
</feature>
<feature type="sequence variant" id="VAR_052708" description="In dbSNP:rs4805664.">
    <original>P</original>
    <variation>L</variation>
    <location>
        <position position="687"/>
    </location>
</feature>
<feature type="mutagenesis site" description="Does not inhibit interaction with APBB1." evidence="9">
    <original>VKY</original>
    <variation>ATA</variation>
    <location>
        <begin position="953"/>
        <end position="955"/>
    </location>
</feature>
<feature type="sequence conflict" description="In Ref. 4; AAI27096/AAI27097." evidence="12" ref="4">
    <original>L</original>
    <variation>V</variation>
    <location>
        <position position="176"/>
    </location>
</feature>
<feature type="strand" evidence="14">
    <location>
        <begin position="213"/>
        <end position="220"/>
    </location>
</feature>
<feature type="strand" evidence="14">
    <location>
        <begin position="222"/>
        <end position="225"/>
    </location>
</feature>
<feature type="helix" evidence="14">
    <location>
        <begin position="226"/>
        <end position="235"/>
    </location>
</feature>
<feature type="strand" evidence="14">
    <location>
        <begin position="278"/>
        <end position="280"/>
    </location>
</feature>
<feature type="helix" evidence="14">
    <location>
        <begin position="287"/>
        <end position="296"/>
    </location>
</feature>
<feature type="turn" evidence="14">
    <location>
        <begin position="297"/>
        <end position="301"/>
    </location>
</feature>
<gene>
    <name type="primary">TSHZ3</name>
    <name type="synonym">KIAA1474</name>
    <name type="synonym">TSH3</name>
    <name type="synonym">ZNF537</name>
</gene>
<evidence type="ECO:0000250" key="1"/>
<evidence type="ECO:0000250" key="2">
    <source>
        <dbReference type="UniProtKB" id="Q8CGV9"/>
    </source>
</evidence>
<evidence type="ECO:0000255" key="3"/>
<evidence type="ECO:0000255" key="4">
    <source>
        <dbReference type="PROSITE-ProRule" id="PRU00042"/>
    </source>
</evidence>
<evidence type="ECO:0000255" key="5">
    <source>
        <dbReference type="PROSITE-ProRule" id="PRU00108"/>
    </source>
</evidence>
<evidence type="ECO:0000256" key="6">
    <source>
        <dbReference type="SAM" id="MobiDB-lite"/>
    </source>
</evidence>
<evidence type="ECO:0000269" key="7">
    <source>
    </source>
</evidence>
<evidence type="ECO:0000269" key="8">
    <source>
    </source>
</evidence>
<evidence type="ECO:0000269" key="9">
    <source>
    </source>
</evidence>
<evidence type="ECO:0000269" key="10">
    <source>
    </source>
</evidence>
<evidence type="ECO:0000269" key="11">
    <source>
    </source>
</evidence>
<evidence type="ECO:0000305" key="12"/>
<evidence type="ECO:0007744" key="13">
    <source>
    </source>
</evidence>
<evidence type="ECO:0007829" key="14">
    <source>
        <dbReference type="PDB" id="2DMI"/>
    </source>
</evidence>
<dbReference type="EMBL" id="BX648745">
    <property type="protein sequence ID" value="CAH56184.1"/>
    <property type="molecule type" value="mRNA"/>
</dbReference>
<dbReference type="EMBL" id="AB040907">
    <property type="protein sequence ID" value="BAA95998.1"/>
    <property type="molecule type" value="mRNA"/>
</dbReference>
<dbReference type="EMBL" id="AL136805">
    <property type="protein sequence ID" value="CAB66739.1"/>
    <property type="status" value="ALT_INIT"/>
    <property type="molecule type" value="mRNA"/>
</dbReference>
<dbReference type="EMBL" id="BC127095">
    <property type="protein sequence ID" value="AAI27096.1"/>
    <property type="status" value="ALT_INIT"/>
    <property type="molecule type" value="mRNA"/>
</dbReference>
<dbReference type="EMBL" id="BC127096">
    <property type="protein sequence ID" value="AAI27097.1"/>
    <property type="status" value="ALT_INIT"/>
    <property type="molecule type" value="mRNA"/>
</dbReference>
<dbReference type="CCDS" id="CCDS12421.2"/>
<dbReference type="RefSeq" id="NP_065907.2">
    <property type="nucleotide sequence ID" value="NM_020856.4"/>
</dbReference>
<dbReference type="RefSeq" id="XP_047295088.1">
    <property type="nucleotide sequence ID" value="XM_047439132.1"/>
</dbReference>
<dbReference type="PDB" id="2DMI">
    <property type="method" value="NMR"/>
    <property type="chains" value="A=202-303"/>
</dbReference>
<dbReference type="PDBsum" id="2DMI"/>
<dbReference type="SMR" id="Q63HK5"/>
<dbReference type="BioGRID" id="121663">
    <property type="interactions" value="79"/>
</dbReference>
<dbReference type="CORUM" id="Q63HK5"/>
<dbReference type="FunCoup" id="Q63HK5">
    <property type="interactions" value="1844"/>
</dbReference>
<dbReference type="IntAct" id="Q63HK5">
    <property type="interactions" value="55"/>
</dbReference>
<dbReference type="MINT" id="Q63HK5"/>
<dbReference type="STRING" id="9606.ENSP00000240587"/>
<dbReference type="GlyCosmos" id="Q63HK5">
    <property type="glycosylation" value="2 sites, 1 glycan"/>
</dbReference>
<dbReference type="GlyGen" id="Q63HK5">
    <property type="glycosylation" value="4 sites, 1 O-linked glycan (4 sites)"/>
</dbReference>
<dbReference type="iPTMnet" id="Q63HK5"/>
<dbReference type="PhosphoSitePlus" id="Q63HK5"/>
<dbReference type="BioMuta" id="TSHZ3"/>
<dbReference type="DMDM" id="85541971"/>
<dbReference type="jPOST" id="Q63HK5"/>
<dbReference type="MassIVE" id="Q63HK5"/>
<dbReference type="PaxDb" id="9606-ENSP00000240587"/>
<dbReference type="PeptideAtlas" id="Q63HK5"/>
<dbReference type="ProteomicsDB" id="65878"/>
<dbReference type="Pumba" id="Q63HK5"/>
<dbReference type="Antibodypedia" id="1780">
    <property type="antibodies" value="109 antibodies from 28 providers"/>
</dbReference>
<dbReference type="DNASU" id="57616"/>
<dbReference type="Ensembl" id="ENST00000240587.5">
    <property type="protein sequence ID" value="ENSP00000240587.4"/>
    <property type="gene ID" value="ENSG00000121297.8"/>
</dbReference>
<dbReference type="GeneID" id="57616"/>
<dbReference type="KEGG" id="hsa:57616"/>
<dbReference type="MANE-Select" id="ENST00000240587.5">
    <property type="protein sequence ID" value="ENSP00000240587.4"/>
    <property type="RefSeq nucleotide sequence ID" value="NM_020856.4"/>
    <property type="RefSeq protein sequence ID" value="NP_065907.2"/>
</dbReference>
<dbReference type="UCSC" id="uc002nsy.5">
    <property type="organism name" value="human"/>
</dbReference>
<dbReference type="AGR" id="HGNC:30700"/>
<dbReference type="CTD" id="57616"/>
<dbReference type="DisGeNET" id="57616"/>
<dbReference type="GeneCards" id="TSHZ3"/>
<dbReference type="HGNC" id="HGNC:30700">
    <property type="gene designation" value="TSHZ3"/>
</dbReference>
<dbReference type="HPA" id="ENSG00000121297">
    <property type="expression patterns" value="Tissue enhanced (ovary)"/>
</dbReference>
<dbReference type="MalaCards" id="TSHZ3"/>
<dbReference type="MIM" id="614119">
    <property type="type" value="gene"/>
</dbReference>
<dbReference type="neXtProt" id="NX_Q63HK5"/>
<dbReference type="OpenTargets" id="ENSG00000121297"/>
<dbReference type="PharmGKB" id="PA134887020"/>
<dbReference type="VEuPathDB" id="HostDB:ENSG00000121297"/>
<dbReference type="eggNOG" id="ENOG502RJS7">
    <property type="taxonomic scope" value="Eukaryota"/>
</dbReference>
<dbReference type="GeneTree" id="ENSGT00950000183051"/>
<dbReference type="HOGENOM" id="CLU_010469_0_0_1"/>
<dbReference type="InParanoid" id="Q63HK5"/>
<dbReference type="OMA" id="VIADDKM"/>
<dbReference type="OrthoDB" id="5815793at2759"/>
<dbReference type="PAN-GO" id="Q63HK5">
    <property type="GO annotations" value="4 GO annotations based on evolutionary models"/>
</dbReference>
<dbReference type="PhylomeDB" id="Q63HK5"/>
<dbReference type="TreeFam" id="TF328447"/>
<dbReference type="PathwayCommons" id="Q63HK5"/>
<dbReference type="SignaLink" id="Q63HK5"/>
<dbReference type="SIGNOR" id="Q63HK5"/>
<dbReference type="BioGRID-ORCS" id="57616">
    <property type="hits" value="11 hits in 1172 CRISPR screens"/>
</dbReference>
<dbReference type="ChiTaRS" id="TSHZ3">
    <property type="organism name" value="human"/>
</dbReference>
<dbReference type="EvolutionaryTrace" id="Q63HK5"/>
<dbReference type="GeneWiki" id="TSHZ3"/>
<dbReference type="GenomeRNAi" id="57616"/>
<dbReference type="Pharos" id="Q63HK5">
    <property type="development level" value="Tbio"/>
</dbReference>
<dbReference type="PRO" id="PR:Q63HK5"/>
<dbReference type="Proteomes" id="UP000005640">
    <property type="component" value="Chromosome 19"/>
</dbReference>
<dbReference type="RNAct" id="Q63HK5">
    <property type="molecule type" value="protein"/>
</dbReference>
<dbReference type="Bgee" id="ENSG00000121297">
    <property type="expression patterns" value="Expressed in cortical plate and 152 other cell types or tissues"/>
</dbReference>
<dbReference type="ExpressionAtlas" id="Q63HK5">
    <property type="expression patterns" value="baseline and differential"/>
</dbReference>
<dbReference type="GO" id="GO:0000785">
    <property type="term" value="C:chromatin"/>
    <property type="evidence" value="ECO:0000247"/>
    <property type="project" value="NTNU_SB"/>
</dbReference>
<dbReference type="GO" id="GO:0030426">
    <property type="term" value="C:growth cone"/>
    <property type="evidence" value="ECO:0007669"/>
    <property type="project" value="UniProtKB-SubCell"/>
</dbReference>
<dbReference type="GO" id="GO:0005654">
    <property type="term" value="C:nucleoplasm"/>
    <property type="evidence" value="ECO:0000314"/>
    <property type="project" value="HPA"/>
</dbReference>
<dbReference type="GO" id="GO:0005634">
    <property type="term" value="C:nucleus"/>
    <property type="evidence" value="ECO:0000314"/>
    <property type="project" value="UniProtKB"/>
</dbReference>
<dbReference type="GO" id="GO:0005886">
    <property type="term" value="C:plasma membrane"/>
    <property type="evidence" value="ECO:0000314"/>
    <property type="project" value="HPA"/>
</dbReference>
<dbReference type="GO" id="GO:0003682">
    <property type="term" value="F:chromatin binding"/>
    <property type="evidence" value="ECO:0000314"/>
    <property type="project" value="UniProtKB"/>
</dbReference>
<dbReference type="GO" id="GO:0003677">
    <property type="term" value="F:DNA binding"/>
    <property type="evidence" value="ECO:0000318"/>
    <property type="project" value="GO_Central"/>
</dbReference>
<dbReference type="GO" id="GO:0000981">
    <property type="term" value="F:DNA-binding transcription factor activity, RNA polymerase II-specific"/>
    <property type="evidence" value="ECO:0000247"/>
    <property type="project" value="NTNU_SB"/>
</dbReference>
<dbReference type="GO" id="GO:0008270">
    <property type="term" value="F:zinc ion binding"/>
    <property type="evidence" value="ECO:0007669"/>
    <property type="project" value="UniProtKB-KW"/>
</dbReference>
<dbReference type="GO" id="GO:0060291">
    <property type="term" value="P:long-term synaptic potentiation"/>
    <property type="evidence" value="ECO:0000250"/>
    <property type="project" value="UniProtKB"/>
</dbReference>
<dbReference type="GO" id="GO:0045892">
    <property type="term" value="P:negative regulation of DNA-templated transcription"/>
    <property type="evidence" value="ECO:0000314"/>
    <property type="project" value="UniProtKB"/>
</dbReference>
<dbReference type="GO" id="GO:0051968">
    <property type="term" value="P:positive regulation of synaptic transmission, glutamatergic"/>
    <property type="evidence" value="ECO:0000250"/>
    <property type="project" value="UniProtKB"/>
</dbReference>
<dbReference type="GO" id="GO:0002087">
    <property type="term" value="P:regulation of respiratory gaseous exchange by nervous system process"/>
    <property type="evidence" value="ECO:0000250"/>
    <property type="project" value="UniProtKB"/>
</dbReference>
<dbReference type="GO" id="GO:0006357">
    <property type="term" value="P:regulation of transcription by RNA polymerase II"/>
    <property type="evidence" value="ECO:0000318"/>
    <property type="project" value="GO_Central"/>
</dbReference>
<dbReference type="CDD" id="cd00086">
    <property type="entry name" value="homeodomain"/>
    <property type="match status" value="1"/>
</dbReference>
<dbReference type="Gene3D" id="3.30.160.60">
    <property type="entry name" value="Classic Zinc Finger"/>
    <property type="match status" value="2"/>
</dbReference>
<dbReference type="InterPro" id="IPR001356">
    <property type="entry name" value="HD"/>
</dbReference>
<dbReference type="InterPro" id="IPR027008">
    <property type="entry name" value="Teashirt_fam"/>
</dbReference>
<dbReference type="InterPro" id="IPR013087">
    <property type="entry name" value="Znf_C2H2_type"/>
</dbReference>
<dbReference type="PANTHER" id="PTHR12487:SF5">
    <property type="entry name" value="TEASHIRT HOMOLOG 3"/>
    <property type="match status" value="1"/>
</dbReference>
<dbReference type="PANTHER" id="PTHR12487">
    <property type="entry name" value="TEASHIRT-RELATED"/>
    <property type="match status" value="1"/>
</dbReference>
<dbReference type="Pfam" id="PF13912">
    <property type="entry name" value="zf-C2H2_6"/>
    <property type="match status" value="1"/>
</dbReference>
<dbReference type="SMART" id="SM00389">
    <property type="entry name" value="HOX"/>
    <property type="match status" value="1"/>
</dbReference>
<dbReference type="SMART" id="SM00355">
    <property type="entry name" value="ZnF_C2H2"/>
    <property type="match status" value="5"/>
</dbReference>
<dbReference type="PROSITE" id="PS50071">
    <property type="entry name" value="HOMEOBOX_2"/>
    <property type="match status" value="1"/>
</dbReference>
<dbReference type="PROSITE" id="PS00028">
    <property type="entry name" value="ZINC_FINGER_C2H2_1"/>
    <property type="match status" value="4"/>
</dbReference>
<dbReference type="PROSITE" id="PS50157">
    <property type="entry name" value="ZINC_FINGER_C2H2_2"/>
    <property type="match status" value="2"/>
</dbReference>
<sequence length="1081" mass="118566">MPRRKQQAPRRAAAYVSEELKAAALVDEGLDPEEHTADGEPSAKYMCPEKELARACPSYQNSPAAEFSCHEMDSESHISETSDRMADFESGSIKNEEETKEVTVPLEDTTVSDSLEQMKAVYNNFLSNSYWSNLNLNLHQPSSEKNNGSSSSSSSSSSSCGSGSFDWHQSAMAKTLQQVSQSRMLPEPSLFSTVQLYRQSSKLYGSIFTGASKFRCKDCSAAYDTLVELTVHMNETGHYRDDNHETDNNNPKRWSKPRKRSLLEMEGKEDAQKVLKCMYCGHSFESLQDLSVHMIKTKHYQKVPLKEPVTPVAAKIIPATRKKASLELELPSSPDSTGGTPKATISDTNDALQKNSNPYITPNNRYGHQNGASYAWHFEARKSQILKCMECGSSHDTLQELTAHMMVTGHFIKVTNSAMKKGKPIVETPVTPTITTLLDEKVQSVPLAATTFTSPSNTPASISPKLNVEVKKEVDKEKAVTDEKPKQKDKPGEEEEKCDISSKYHYLTENDLEESPKGGLDILKSLENTVTSAINKAQNGTPSWGGYPSIHAAYQLPNMMKLSLGSSGKSTPLKPMFGNSEIVSPTKNQTLVSPPSSQTSPMPKTNFHAMEELVKKVTEKVAKVEEKMKEPDGKLSPPKRATPSPCSSEVGEPIKMEASSDGGFRSQENSPSPPRDGCKDGSPLAEPVENGKELVKPLASSLSGSTAIITDHPPEQPFVNPLSALQSVMNIHLGKAAKPSLPALDPMSMLFKMSNSLAEKAAVATPPPLQSKKADHLDRYFYHVNNDQPIDLTKGKSDKGCSLGSVLLSPTSTAPATSSSTVTTAKTSAVVSFMSNSPLRENALSDISDMLKNLTESHTSKSSTPSSISEKSDIDGATLEEAEESTPAQKRKGRQSNWNPQHLLILQAQFAASLRQTSEGKYIMSDLSPQERMHISRFTGLSMTTISHWLANVKYQLRRTGGTKFLKNLDTGHPVFFCNDCASQIRTPSTYISHLESHLGFRLRDLSKLSTEQINSQIAQTKSPSEKMVTSSPEEDLGTSYQCKLCNRTFASKHAVKLHLSKTHGKSPEDHLLYVSELEKQ</sequence>
<protein>
    <recommendedName>
        <fullName>Teashirt homolog 3</fullName>
    </recommendedName>
    <alternativeName>
        <fullName>Zinc finger protein 537</fullName>
    </alternativeName>
</protein>
<organism>
    <name type="scientific">Homo sapiens</name>
    <name type="common">Human</name>
    <dbReference type="NCBI Taxonomy" id="9606"/>
    <lineage>
        <taxon>Eukaryota</taxon>
        <taxon>Metazoa</taxon>
        <taxon>Chordata</taxon>
        <taxon>Craniata</taxon>
        <taxon>Vertebrata</taxon>
        <taxon>Euteleostomi</taxon>
        <taxon>Mammalia</taxon>
        <taxon>Eutheria</taxon>
        <taxon>Euarchontoglires</taxon>
        <taxon>Primates</taxon>
        <taxon>Haplorrhini</taxon>
        <taxon>Catarrhini</taxon>
        <taxon>Hominidae</taxon>
        <taxon>Homo</taxon>
    </lineage>
</organism>
<accession>Q63HK5</accession>
<accession>A1L0U7</accession>
<accession>Q9H0G6</accession>
<accession>Q9P254</accession>
<proteinExistence type="evidence at protein level"/>
<name>TSH3_HUMAN</name>